<organism>
    <name type="scientific">Schizosaccharomyces pombe (strain 972 / ATCC 24843)</name>
    <name type="common">Fission yeast</name>
    <dbReference type="NCBI Taxonomy" id="284812"/>
    <lineage>
        <taxon>Eukaryota</taxon>
        <taxon>Fungi</taxon>
        <taxon>Dikarya</taxon>
        <taxon>Ascomycota</taxon>
        <taxon>Taphrinomycotina</taxon>
        <taxon>Schizosaccharomycetes</taxon>
        <taxon>Schizosaccharomycetales</taxon>
        <taxon>Schizosaccharomycetaceae</taxon>
        <taxon>Schizosaccharomyces</taxon>
    </lineage>
</organism>
<name>MUG64_SCHPO</name>
<dbReference type="EMBL" id="CU329670">
    <property type="protein sequence ID" value="CAA93576.3"/>
    <property type="molecule type" value="Genomic_DNA"/>
</dbReference>
<dbReference type="PIR" id="T38915">
    <property type="entry name" value="T38915"/>
</dbReference>
<dbReference type="RefSeq" id="NP_593220.2">
    <property type="nucleotide sequence ID" value="NM_001018616.3"/>
</dbReference>
<dbReference type="SMR" id="Q10253"/>
<dbReference type="BioGRID" id="279657">
    <property type="interactions" value="12"/>
</dbReference>
<dbReference type="FunCoup" id="Q10253">
    <property type="interactions" value="14"/>
</dbReference>
<dbReference type="IntAct" id="Q10253">
    <property type="interactions" value="1"/>
</dbReference>
<dbReference type="MINT" id="Q10253"/>
<dbReference type="STRING" id="284812.Q10253"/>
<dbReference type="iPTMnet" id="Q10253"/>
<dbReference type="PaxDb" id="4896-SPAC56F8.05c.1"/>
<dbReference type="EnsemblFungi" id="SPAC56F8.05c.1">
    <property type="protein sequence ID" value="SPAC56F8.05c.1:pep"/>
    <property type="gene ID" value="SPAC56F8.05c"/>
</dbReference>
<dbReference type="GeneID" id="2543229"/>
<dbReference type="KEGG" id="spo:2543229"/>
<dbReference type="PomBase" id="SPAC56F8.05c">
    <property type="gene designation" value="mug64"/>
</dbReference>
<dbReference type="VEuPathDB" id="FungiDB:SPAC56F8.05c"/>
<dbReference type="eggNOG" id="ENOG502QQ2V">
    <property type="taxonomic scope" value="Eukaryota"/>
</dbReference>
<dbReference type="HOGENOM" id="CLU_059017_0_0_1"/>
<dbReference type="InParanoid" id="Q10253"/>
<dbReference type="OMA" id="EATHLMK"/>
<dbReference type="PhylomeDB" id="Q10253"/>
<dbReference type="PRO" id="PR:Q10253"/>
<dbReference type="Proteomes" id="UP000002485">
    <property type="component" value="Chromosome I"/>
</dbReference>
<dbReference type="GO" id="GO:0005737">
    <property type="term" value="C:cytoplasm"/>
    <property type="evidence" value="ECO:0007005"/>
    <property type="project" value="PomBase"/>
</dbReference>
<dbReference type="GO" id="GO:0000139">
    <property type="term" value="C:Golgi membrane"/>
    <property type="evidence" value="ECO:0000266"/>
    <property type="project" value="PomBase"/>
</dbReference>
<dbReference type="GO" id="GO:0006897">
    <property type="term" value="P:endocytosis"/>
    <property type="evidence" value="ECO:0000266"/>
    <property type="project" value="PomBase"/>
</dbReference>
<dbReference type="GO" id="GO:0051321">
    <property type="term" value="P:meiotic cell cycle"/>
    <property type="evidence" value="ECO:0007669"/>
    <property type="project" value="UniProtKB-KW"/>
</dbReference>
<dbReference type="CDD" id="cd07600">
    <property type="entry name" value="BAR_Gvp36"/>
    <property type="match status" value="1"/>
</dbReference>
<dbReference type="Gene3D" id="1.20.1270.60">
    <property type="entry name" value="Arfaptin homology (AH) domain/BAR domain"/>
    <property type="match status" value="1"/>
</dbReference>
<dbReference type="InterPro" id="IPR027267">
    <property type="entry name" value="AH/BAR_dom_sf"/>
</dbReference>
<dbReference type="InterPro" id="IPR018859">
    <property type="entry name" value="BAR_dom-cont"/>
</dbReference>
<dbReference type="Pfam" id="PF10455">
    <property type="entry name" value="BAR_2"/>
    <property type="match status" value="1"/>
</dbReference>
<dbReference type="SUPFAM" id="SSF103657">
    <property type="entry name" value="BAR/IMD domain-like"/>
    <property type="match status" value="1"/>
</dbReference>
<proteinExistence type="evidence at protein level"/>
<accession>Q10253</accession>
<protein>
    <recommendedName>
        <fullName>Meiotically up-regulated gene 64 protein</fullName>
    </recommendedName>
</protein>
<gene>
    <name type="primary">mug64</name>
    <name type="ORF">SPAC56F8.05c</name>
</gene>
<feature type="chain" id="PRO_0000116567" description="Meiotically up-regulated gene 64 protein">
    <location>
        <begin position="1"/>
        <end position="286"/>
    </location>
</feature>
<reference key="1">
    <citation type="journal article" date="2002" name="Nature">
        <title>The genome sequence of Schizosaccharomyces pombe.</title>
        <authorList>
            <person name="Wood V."/>
            <person name="Gwilliam R."/>
            <person name="Rajandream M.A."/>
            <person name="Lyne M.H."/>
            <person name="Lyne R."/>
            <person name="Stewart A."/>
            <person name="Sgouros J.G."/>
            <person name="Peat N."/>
            <person name="Hayles J."/>
            <person name="Baker S.G."/>
            <person name="Basham D."/>
            <person name="Bowman S."/>
            <person name="Brooks K."/>
            <person name="Brown D."/>
            <person name="Brown S."/>
            <person name="Chillingworth T."/>
            <person name="Churcher C.M."/>
            <person name="Collins M."/>
            <person name="Connor R."/>
            <person name="Cronin A."/>
            <person name="Davis P."/>
            <person name="Feltwell T."/>
            <person name="Fraser A."/>
            <person name="Gentles S."/>
            <person name="Goble A."/>
            <person name="Hamlin N."/>
            <person name="Harris D.E."/>
            <person name="Hidalgo J."/>
            <person name="Hodgson G."/>
            <person name="Holroyd S."/>
            <person name="Hornsby T."/>
            <person name="Howarth S."/>
            <person name="Huckle E.J."/>
            <person name="Hunt S."/>
            <person name="Jagels K."/>
            <person name="James K.D."/>
            <person name="Jones L."/>
            <person name="Jones M."/>
            <person name="Leather S."/>
            <person name="McDonald S."/>
            <person name="McLean J."/>
            <person name="Mooney P."/>
            <person name="Moule S."/>
            <person name="Mungall K.L."/>
            <person name="Murphy L.D."/>
            <person name="Niblett D."/>
            <person name="Odell C."/>
            <person name="Oliver K."/>
            <person name="O'Neil S."/>
            <person name="Pearson D."/>
            <person name="Quail M.A."/>
            <person name="Rabbinowitsch E."/>
            <person name="Rutherford K.M."/>
            <person name="Rutter S."/>
            <person name="Saunders D."/>
            <person name="Seeger K."/>
            <person name="Sharp S."/>
            <person name="Skelton J."/>
            <person name="Simmonds M.N."/>
            <person name="Squares R."/>
            <person name="Squares S."/>
            <person name="Stevens K."/>
            <person name="Taylor K."/>
            <person name="Taylor R.G."/>
            <person name="Tivey A."/>
            <person name="Walsh S.V."/>
            <person name="Warren T."/>
            <person name="Whitehead S."/>
            <person name="Woodward J.R."/>
            <person name="Volckaert G."/>
            <person name="Aert R."/>
            <person name="Robben J."/>
            <person name="Grymonprez B."/>
            <person name="Weltjens I."/>
            <person name="Vanstreels E."/>
            <person name="Rieger M."/>
            <person name="Schaefer M."/>
            <person name="Mueller-Auer S."/>
            <person name="Gabel C."/>
            <person name="Fuchs M."/>
            <person name="Duesterhoeft A."/>
            <person name="Fritzc C."/>
            <person name="Holzer E."/>
            <person name="Moestl D."/>
            <person name="Hilbert H."/>
            <person name="Borzym K."/>
            <person name="Langer I."/>
            <person name="Beck A."/>
            <person name="Lehrach H."/>
            <person name="Reinhardt R."/>
            <person name="Pohl T.M."/>
            <person name="Eger P."/>
            <person name="Zimmermann W."/>
            <person name="Wedler H."/>
            <person name="Wambutt R."/>
            <person name="Purnelle B."/>
            <person name="Goffeau A."/>
            <person name="Cadieu E."/>
            <person name="Dreano S."/>
            <person name="Gloux S."/>
            <person name="Lelaure V."/>
            <person name="Mottier S."/>
            <person name="Galibert F."/>
            <person name="Aves S.J."/>
            <person name="Xiang Z."/>
            <person name="Hunt C."/>
            <person name="Moore K."/>
            <person name="Hurst S.M."/>
            <person name="Lucas M."/>
            <person name="Rochet M."/>
            <person name="Gaillardin C."/>
            <person name="Tallada V.A."/>
            <person name="Garzon A."/>
            <person name="Thode G."/>
            <person name="Daga R.R."/>
            <person name="Cruzado L."/>
            <person name="Jimenez J."/>
            <person name="Sanchez M."/>
            <person name="del Rey F."/>
            <person name="Benito J."/>
            <person name="Dominguez A."/>
            <person name="Revuelta J.L."/>
            <person name="Moreno S."/>
            <person name="Armstrong J."/>
            <person name="Forsburg S.L."/>
            <person name="Cerutti L."/>
            <person name="Lowe T."/>
            <person name="McCombie W.R."/>
            <person name="Paulsen I."/>
            <person name="Potashkin J."/>
            <person name="Shpakovski G.V."/>
            <person name="Ussery D."/>
            <person name="Barrell B.G."/>
            <person name="Nurse P."/>
        </authorList>
    </citation>
    <scope>NUCLEOTIDE SEQUENCE [LARGE SCALE GENOMIC DNA]</scope>
    <source>
        <strain>972 / ATCC 24843</strain>
    </source>
</reference>
<reference key="2">
    <citation type="journal article" date="2005" name="Curr. Biol.">
        <title>A large-scale screen in S. pombe identifies seven novel genes required for critical meiotic events.</title>
        <authorList>
            <person name="Martin-Castellanos C."/>
            <person name="Blanco M."/>
            <person name="Rozalen A.E."/>
            <person name="Perez-Hidalgo L."/>
            <person name="Garcia A.I."/>
            <person name="Conde F."/>
            <person name="Mata J."/>
            <person name="Ellermeier C."/>
            <person name="Davis L."/>
            <person name="San-Segundo P."/>
            <person name="Smith G.R."/>
            <person name="Moreno S."/>
        </authorList>
    </citation>
    <scope>FUNCTION IN MEIOSIS</scope>
</reference>
<reference key="3">
    <citation type="journal article" date="2006" name="Nat. Biotechnol.">
        <title>ORFeome cloning and global analysis of protein localization in the fission yeast Schizosaccharomyces pombe.</title>
        <authorList>
            <person name="Matsuyama A."/>
            <person name="Arai R."/>
            <person name="Yashiroda Y."/>
            <person name="Shirai A."/>
            <person name="Kamata A."/>
            <person name="Sekido S."/>
            <person name="Kobayashi Y."/>
            <person name="Hashimoto A."/>
            <person name="Hamamoto M."/>
            <person name="Hiraoka Y."/>
            <person name="Horinouchi S."/>
            <person name="Yoshida M."/>
        </authorList>
    </citation>
    <scope>SUBCELLULAR LOCATION [LARGE SCALE ANALYSIS]</scope>
</reference>
<comment type="function">
    <text evidence="1">Has a role in meiosis.</text>
</comment>
<comment type="subcellular location">
    <subcellularLocation>
        <location evidence="2">Cytoplasm</location>
    </subcellularLocation>
</comment>
<sequence>METFKTHITGQFNATVSSITPFAKKTTHYLRTKIGSRVEELSLPEDYVELEQQVDSLKEAYNLVLPIVETVEVDGYDYPTNFRDSITDFGKTVSGKVRNLGNLTPLEQTPLASVGKNLEEKEAAAKPSRTLYNAISRAASEATTKMGAGNPLSSAFGQISVLEEKVGNLQGERDSAISKNFCEQVRAVLYPRFAEAHRVKADVQDKRLQLEMAKLDVESAKPENLEHCKSAVRSAEDELNGAIEHAKILYEQILNKDYNTDLLRSIIKNQLKFHQDAAAALSDITI</sequence>
<evidence type="ECO:0000269" key="1">
    <source>
    </source>
</evidence>
<evidence type="ECO:0000269" key="2">
    <source>
    </source>
</evidence>
<keyword id="KW-0963">Cytoplasm</keyword>
<keyword id="KW-0469">Meiosis</keyword>
<keyword id="KW-1185">Reference proteome</keyword>